<accession>Q01747</accession>
<protein>
    <recommendedName>
        <fullName evidence="6">Leech anti-platelet protein</fullName>
        <shortName evidence="6">LAPP</shortName>
    </recommendedName>
</protein>
<reference key="1">
    <citation type="journal article" date="1992" name="J. Biol. Chem.">
        <title>An inhibitor of collagen-stimulated platelet activation from the salivary glands of the Haementeria officinalis leech. II. Cloning of the cDNA and expression.</title>
        <authorList>
            <person name="Keller P.M."/>
            <person name="Schultz L.D."/>
            <person name="Condra C."/>
            <person name="Karczewski J."/>
            <person name="Connolly T.M."/>
        </authorList>
    </citation>
    <scope>NUCLEOTIDE SEQUENCE [MRNA]</scope>
    <scope>FUNCTION</scope>
    <scope>RECOMBINANT EXPRESSION</scope>
    <source>
        <tissue>Salivary gland</tissue>
    </source>
</reference>
<reference key="2">
    <citation type="journal article" date="1992" name="J. Biol. Chem.">
        <title>An inhibitor of collagen-stimulated platelet activation from the salivary glands of the Haementeria officinalis leech. I. Identification, isolation, and characterization.</title>
        <authorList>
            <person name="Connolly T.M."/>
            <person name="Jacobs J.W."/>
            <person name="Condra C."/>
        </authorList>
    </citation>
    <scope>PROTEIN SEQUENCE OF 59-88; 101-113 AND 123-139</scope>
    <scope>FUNCTION</scope>
    <source>
        <tissue>Salivary gland</tissue>
    </source>
</reference>
<reference evidence="9" key="3">
    <citation type="journal article" date="2001" name="Acta Crystallogr. D">
        <title>The structure of leech anti-platelet protein, an inhibitor of haemostasis.</title>
        <authorList>
            <person name="Huizinga E.G."/>
            <person name="Schouten A."/>
            <person name="Connolly T.M."/>
            <person name="Kroon J."/>
            <person name="Sixma J.J."/>
            <person name="Gros P."/>
        </authorList>
    </citation>
    <scope>X-RAY CRYSTALLOGRAPHY (2.2 ANGSTROMS) OF 22-147</scope>
</reference>
<organism>
    <name type="scientific">Haementeria officinalis</name>
    <name type="common">Mexican leech</name>
    <dbReference type="NCBI Taxonomy" id="6410"/>
    <lineage>
        <taxon>Eukaryota</taxon>
        <taxon>Metazoa</taxon>
        <taxon>Spiralia</taxon>
        <taxon>Lophotrochozoa</taxon>
        <taxon>Annelida</taxon>
        <taxon>Clitellata</taxon>
        <taxon>Hirudinea</taxon>
        <taxon>Rhynchobdellida</taxon>
        <taxon>Glossiphoniidae</taxon>
        <taxon>Haementeria</taxon>
    </lineage>
</organism>
<evidence type="ECO:0000255" key="1"/>
<evidence type="ECO:0000256" key="2">
    <source>
        <dbReference type="SAM" id="MobiDB-lite"/>
    </source>
</evidence>
<evidence type="ECO:0000269" key="3">
    <source>
    </source>
</evidence>
<evidence type="ECO:0000269" key="4">
    <source>
    </source>
</evidence>
<evidence type="ECO:0000269" key="5">
    <source>
    </source>
</evidence>
<evidence type="ECO:0000303" key="6">
    <source>
    </source>
</evidence>
<evidence type="ECO:0000305" key="7">
    <source>
    </source>
</evidence>
<evidence type="ECO:0000305" key="8">
    <source>
    </source>
</evidence>
<evidence type="ECO:0007744" key="9">
    <source>
        <dbReference type="PDB" id="1I8N"/>
    </source>
</evidence>
<evidence type="ECO:0007829" key="10">
    <source>
        <dbReference type="PDB" id="1I8N"/>
    </source>
</evidence>
<name>LAPP_HAEOF</name>
<sequence>MNSFLFSLACSLLVAIPAISAQDEDAGGAGDETSEGEDTTGSDETPSTGGGGDGGNEETITAGNEDCWSKRPGWKLPDNLLTKTEFTSVDECRKMCEESAVEPSCYILQINTETNECYRNNEGDVTWSSLQYDQPNVVQWHLHACSK</sequence>
<proteinExistence type="evidence at protein level"/>
<keyword id="KW-0002">3D-structure</keyword>
<keyword id="KW-0903">Direct protein sequencing</keyword>
<keyword id="KW-1015">Disulfide bond</keyword>
<keyword id="KW-1199">Hemostasis impairing toxin</keyword>
<keyword id="KW-1201">Platelet aggregation inhibiting toxin</keyword>
<keyword id="KW-0964">Secreted</keyword>
<keyword id="KW-0732">Signal</keyword>
<keyword id="KW-0800">Toxin</keyword>
<feature type="signal peptide" evidence="1">
    <location>
        <begin position="1"/>
        <end position="21"/>
    </location>
</feature>
<feature type="chain" id="PRO_0000021578" description="Leech anti-platelet protein">
    <location>
        <begin position="22"/>
        <end position="147"/>
    </location>
</feature>
<feature type="region of interest" description="Disordered" evidence="2">
    <location>
        <begin position="21"/>
        <end position="71"/>
    </location>
</feature>
<feature type="compositionally biased region" description="Acidic residues" evidence="2">
    <location>
        <begin position="22"/>
        <end position="41"/>
    </location>
</feature>
<feature type="disulfide bond" evidence="3 9">
    <location>
        <begin position="67"/>
        <end position="145"/>
    </location>
</feature>
<feature type="disulfide bond" evidence="3 9">
    <location>
        <begin position="92"/>
        <end position="117"/>
    </location>
</feature>
<feature type="disulfide bond" evidence="3 9">
    <location>
        <begin position="96"/>
        <end position="105"/>
    </location>
</feature>
<feature type="strand" evidence="10">
    <location>
        <begin position="59"/>
        <end position="61"/>
    </location>
</feature>
<feature type="strand" evidence="10">
    <location>
        <begin position="63"/>
        <end position="72"/>
    </location>
</feature>
<feature type="helix" evidence="10">
    <location>
        <begin position="78"/>
        <end position="80"/>
    </location>
</feature>
<feature type="strand" evidence="10">
    <location>
        <begin position="81"/>
        <end position="83"/>
    </location>
</feature>
<feature type="helix" evidence="10">
    <location>
        <begin position="89"/>
        <end position="98"/>
    </location>
</feature>
<feature type="strand" evidence="10">
    <location>
        <begin position="101"/>
        <end position="103"/>
    </location>
</feature>
<feature type="strand" evidence="10">
    <location>
        <begin position="107"/>
        <end position="111"/>
    </location>
</feature>
<feature type="turn" evidence="10">
    <location>
        <begin position="112"/>
        <end position="114"/>
    </location>
</feature>
<feature type="strand" evidence="10">
    <location>
        <begin position="117"/>
        <end position="120"/>
    </location>
</feature>
<feature type="strand" evidence="10">
    <location>
        <begin position="122"/>
        <end position="124"/>
    </location>
</feature>
<feature type="helix" evidence="10">
    <location>
        <begin position="127"/>
        <end position="129"/>
    </location>
</feature>
<feature type="strand" evidence="10">
    <location>
        <begin position="137"/>
        <end position="144"/>
    </location>
</feature>
<comment type="function">
    <text evidence="4 5">Inhibits collagen-stimulated platelet aggregation (IC(50)=60 nM), dense granule release and serotonin release (PubMed:1551897, PubMed:1551898). Does not inhibit platelet aggregation induced by ADP, arachidonic acid, and thrombin (PubMed:1551897).</text>
</comment>
<comment type="subcellular location">
    <subcellularLocation>
        <location evidence="7">Secreted</location>
    </subcellularLocation>
</comment>
<comment type="tissue specificity">
    <text evidence="7 8">Expressed by salivary glands.</text>
</comment>
<comment type="PTM">
    <text evidence="4">The N-terminus is blocked.</text>
</comment>
<dbReference type="EMBL" id="M81489">
    <property type="protein sequence ID" value="AAA29194.1"/>
    <property type="molecule type" value="mRNA"/>
</dbReference>
<dbReference type="PIR" id="A42435">
    <property type="entry name" value="A42435"/>
</dbReference>
<dbReference type="PDB" id="1I8N">
    <property type="method" value="X-ray"/>
    <property type="resolution" value="2.20 A"/>
    <property type="chains" value="A/B/C=22-147"/>
</dbReference>
<dbReference type="PDBsum" id="1I8N"/>
<dbReference type="SMR" id="Q01747"/>
<dbReference type="EvolutionaryTrace" id="Q01747"/>
<dbReference type="GO" id="GO:0005576">
    <property type="term" value="C:extracellular region"/>
    <property type="evidence" value="ECO:0007669"/>
    <property type="project" value="UniProtKB-SubCell"/>
</dbReference>
<dbReference type="GO" id="GO:0090729">
    <property type="term" value="F:toxin activity"/>
    <property type="evidence" value="ECO:0007669"/>
    <property type="project" value="UniProtKB-KW"/>
</dbReference>
<dbReference type="CDD" id="cd00129">
    <property type="entry name" value="PAN_APPLE"/>
    <property type="match status" value="1"/>
</dbReference>
<dbReference type="Gene3D" id="3.50.4.10">
    <property type="entry name" value="Hepatocyte Growth Factor"/>
    <property type="match status" value="1"/>
</dbReference>
<dbReference type="SUPFAM" id="SSF57414">
    <property type="entry name" value="Hairpin loop containing domain-like"/>
    <property type="match status" value="1"/>
</dbReference>